<gene>
    <name evidence="1" type="primary">rplP</name>
    <name type="ordered locus">aq_018</name>
</gene>
<protein>
    <recommendedName>
        <fullName evidence="1">Large ribosomal subunit protein uL16</fullName>
    </recommendedName>
    <alternativeName>
        <fullName evidence="2">50S ribosomal protein L16</fullName>
    </alternativeName>
</protein>
<accession>O66438</accession>
<name>RL16_AQUAE</name>
<evidence type="ECO:0000255" key="1">
    <source>
        <dbReference type="HAMAP-Rule" id="MF_01342"/>
    </source>
</evidence>
<evidence type="ECO:0000305" key="2"/>
<sequence length="142" mass="16184">MYLQPKKVRWRKQRRGTLKGKAFRGNKLAFGEYGIQALDRAWITQQQIEAVRVALVRSLKKGAKVWIRIFPDKPYTKKPNEVRMGGGKGDPEGFVAVVKPGRILFEFTGVPEEVAQEAFTIAASKLPIPVRLVKYGEFTFKY</sequence>
<keyword id="KW-1185">Reference proteome</keyword>
<keyword id="KW-0687">Ribonucleoprotein</keyword>
<keyword id="KW-0689">Ribosomal protein</keyword>
<keyword id="KW-0694">RNA-binding</keyword>
<keyword id="KW-0699">rRNA-binding</keyword>
<keyword id="KW-0820">tRNA-binding</keyword>
<organism>
    <name type="scientific">Aquifex aeolicus (strain VF5)</name>
    <dbReference type="NCBI Taxonomy" id="224324"/>
    <lineage>
        <taxon>Bacteria</taxon>
        <taxon>Pseudomonadati</taxon>
        <taxon>Aquificota</taxon>
        <taxon>Aquificia</taxon>
        <taxon>Aquificales</taxon>
        <taxon>Aquificaceae</taxon>
        <taxon>Aquifex</taxon>
    </lineage>
</organism>
<proteinExistence type="inferred from homology"/>
<feature type="chain" id="PRO_0000062032" description="Large ribosomal subunit protein uL16">
    <location>
        <begin position="1"/>
        <end position="142"/>
    </location>
</feature>
<comment type="function">
    <text evidence="1">Binds 23S rRNA and is also seen to make contacts with the A and possibly P site tRNAs.</text>
</comment>
<comment type="subunit">
    <text evidence="1">Part of the 50S ribosomal subunit.</text>
</comment>
<comment type="similarity">
    <text evidence="1">Belongs to the universal ribosomal protein uL16 family.</text>
</comment>
<dbReference type="EMBL" id="AE000657">
    <property type="protein sequence ID" value="AAC06395.1"/>
    <property type="molecule type" value="Genomic_DNA"/>
</dbReference>
<dbReference type="PIR" id="C70301">
    <property type="entry name" value="C70301"/>
</dbReference>
<dbReference type="RefSeq" id="NP_212996.1">
    <property type="nucleotide sequence ID" value="NC_000918.1"/>
</dbReference>
<dbReference type="RefSeq" id="WP_010879934.1">
    <property type="nucleotide sequence ID" value="NC_000918.1"/>
</dbReference>
<dbReference type="SMR" id="O66438"/>
<dbReference type="FunCoup" id="O66438">
    <property type="interactions" value="470"/>
</dbReference>
<dbReference type="STRING" id="224324.aq_018"/>
<dbReference type="EnsemblBacteria" id="AAC06395">
    <property type="protein sequence ID" value="AAC06395"/>
    <property type="gene ID" value="aq_018"/>
</dbReference>
<dbReference type="KEGG" id="aae:aq_018"/>
<dbReference type="PATRIC" id="fig|224324.8.peg.11"/>
<dbReference type="eggNOG" id="COG0197">
    <property type="taxonomic scope" value="Bacteria"/>
</dbReference>
<dbReference type="HOGENOM" id="CLU_078858_2_1_0"/>
<dbReference type="InParanoid" id="O66438"/>
<dbReference type="OrthoDB" id="9802589at2"/>
<dbReference type="Proteomes" id="UP000000798">
    <property type="component" value="Chromosome"/>
</dbReference>
<dbReference type="GO" id="GO:0022625">
    <property type="term" value="C:cytosolic large ribosomal subunit"/>
    <property type="evidence" value="ECO:0000318"/>
    <property type="project" value="GO_Central"/>
</dbReference>
<dbReference type="GO" id="GO:0019843">
    <property type="term" value="F:rRNA binding"/>
    <property type="evidence" value="ECO:0000318"/>
    <property type="project" value="GO_Central"/>
</dbReference>
<dbReference type="GO" id="GO:0003735">
    <property type="term" value="F:structural constituent of ribosome"/>
    <property type="evidence" value="ECO:0000318"/>
    <property type="project" value="GO_Central"/>
</dbReference>
<dbReference type="GO" id="GO:0000049">
    <property type="term" value="F:tRNA binding"/>
    <property type="evidence" value="ECO:0007669"/>
    <property type="project" value="UniProtKB-KW"/>
</dbReference>
<dbReference type="GO" id="GO:0006412">
    <property type="term" value="P:translation"/>
    <property type="evidence" value="ECO:0007669"/>
    <property type="project" value="UniProtKB-UniRule"/>
</dbReference>
<dbReference type="CDD" id="cd01433">
    <property type="entry name" value="Ribosomal_L16_L10e"/>
    <property type="match status" value="1"/>
</dbReference>
<dbReference type="FunFam" id="3.90.1170.10:FF:000001">
    <property type="entry name" value="50S ribosomal protein L16"/>
    <property type="match status" value="1"/>
</dbReference>
<dbReference type="Gene3D" id="3.90.1170.10">
    <property type="entry name" value="Ribosomal protein L10e/L16"/>
    <property type="match status" value="1"/>
</dbReference>
<dbReference type="HAMAP" id="MF_01342">
    <property type="entry name" value="Ribosomal_uL16"/>
    <property type="match status" value="1"/>
</dbReference>
<dbReference type="InterPro" id="IPR047873">
    <property type="entry name" value="Ribosomal_uL16"/>
</dbReference>
<dbReference type="InterPro" id="IPR000114">
    <property type="entry name" value="Ribosomal_uL16_bact-type"/>
</dbReference>
<dbReference type="InterPro" id="IPR020798">
    <property type="entry name" value="Ribosomal_uL16_CS"/>
</dbReference>
<dbReference type="InterPro" id="IPR016180">
    <property type="entry name" value="Ribosomal_uL16_dom"/>
</dbReference>
<dbReference type="InterPro" id="IPR036920">
    <property type="entry name" value="Ribosomal_uL16_sf"/>
</dbReference>
<dbReference type="NCBIfam" id="TIGR01164">
    <property type="entry name" value="rplP_bact"/>
    <property type="match status" value="1"/>
</dbReference>
<dbReference type="PANTHER" id="PTHR12220">
    <property type="entry name" value="50S/60S RIBOSOMAL PROTEIN L16"/>
    <property type="match status" value="1"/>
</dbReference>
<dbReference type="PANTHER" id="PTHR12220:SF13">
    <property type="entry name" value="LARGE RIBOSOMAL SUBUNIT PROTEIN UL16M"/>
    <property type="match status" value="1"/>
</dbReference>
<dbReference type="Pfam" id="PF00252">
    <property type="entry name" value="Ribosomal_L16"/>
    <property type="match status" value="1"/>
</dbReference>
<dbReference type="PRINTS" id="PR00060">
    <property type="entry name" value="RIBOSOMALL16"/>
</dbReference>
<dbReference type="SUPFAM" id="SSF54686">
    <property type="entry name" value="Ribosomal protein L16p/L10e"/>
    <property type="match status" value="1"/>
</dbReference>
<dbReference type="PROSITE" id="PS00586">
    <property type="entry name" value="RIBOSOMAL_L16_1"/>
    <property type="match status" value="1"/>
</dbReference>
<dbReference type="PROSITE" id="PS00701">
    <property type="entry name" value="RIBOSOMAL_L16_2"/>
    <property type="match status" value="1"/>
</dbReference>
<reference key="1">
    <citation type="journal article" date="1998" name="Nature">
        <title>The complete genome of the hyperthermophilic bacterium Aquifex aeolicus.</title>
        <authorList>
            <person name="Deckert G."/>
            <person name="Warren P.V."/>
            <person name="Gaasterland T."/>
            <person name="Young W.G."/>
            <person name="Lenox A.L."/>
            <person name="Graham D.E."/>
            <person name="Overbeek R."/>
            <person name="Snead M.A."/>
            <person name="Keller M."/>
            <person name="Aujay M."/>
            <person name="Huber R."/>
            <person name="Feldman R.A."/>
            <person name="Short J.M."/>
            <person name="Olsen G.J."/>
            <person name="Swanson R.V."/>
        </authorList>
    </citation>
    <scope>NUCLEOTIDE SEQUENCE [LARGE SCALE GENOMIC DNA]</scope>
    <source>
        <strain>VF5</strain>
    </source>
</reference>